<proteinExistence type="inferred from homology"/>
<evidence type="ECO:0000255" key="1">
    <source>
        <dbReference type="HAMAP-Rule" id="MF_00741"/>
    </source>
</evidence>
<feature type="chain" id="PRO_0000148256" description="Phosphoribosylformylglycinamidine cyclo-ligase">
    <location>
        <begin position="1"/>
        <end position="340"/>
    </location>
</feature>
<sequence>MSEKNAYAQSGVDVEAGYEVVERIKKHVARTERAGVMGALGGFGGMFDLSQTGVKEPVLISGTDGVGTKLMLAIKYDKHDTIGQDCVAMCVNDIIAAGAEPLYFLDYVATGKNEPAKLEQVVAGVAEGCVQASAALIGGETAEMPGMYGEDDYDLAGFAVGVAEKSQIIDGSKVKEGDILLGLASSGIHSNGYSLVRRVFADYTGDEVLPELEGKQLKDVLLEPTRIYVKAALPLIKEELVNGIAHITGGGFIENVPRMFADDLAAEIDEDKVPVLPIFKALEKYGDIKHEEMFEIFNMGVGLMLDVNPENVDRVKELLDEPVYEIGRIIKKADDSVVIK</sequence>
<keyword id="KW-0067">ATP-binding</keyword>
<keyword id="KW-0963">Cytoplasm</keyword>
<keyword id="KW-0436">Ligase</keyword>
<keyword id="KW-0547">Nucleotide-binding</keyword>
<keyword id="KW-0658">Purine biosynthesis</keyword>
<keyword id="KW-1185">Reference proteome</keyword>
<organism>
    <name type="scientific">Streptococcus agalactiae serotype V (strain ATCC BAA-611 / 2603 V/R)</name>
    <dbReference type="NCBI Taxonomy" id="208435"/>
    <lineage>
        <taxon>Bacteria</taxon>
        <taxon>Bacillati</taxon>
        <taxon>Bacillota</taxon>
        <taxon>Bacilli</taxon>
        <taxon>Lactobacillales</taxon>
        <taxon>Streptococcaceae</taxon>
        <taxon>Streptococcus</taxon>
    </lineage>
</organism>
<accession>Q8E2G1</accession>
<dbReference type="EC" id="6.3.3.1" evidence="1"/>
<dbReference type="EMBL" id="AE009948">
    <property type="protein sequence ID" value="AAM98935.1"/>
    <property type="molecule type" value="Genomic_DNA"/>
</dbReference>
<dbReference type="RefSeq" id="NP_687063.1">
    <property type="nucleotide sequence ID" value="NC_004116.1"/>
</dbReference>
<dbReference type="RefSeq" id="WP_001291337.1">
    <property type="nucleotide sequence ID" value="NC_004116.1"/>
</dbReference>
<dbReference type="SMR" id="Q8E2G1"/>
<dbReference type="STRING" id="208435.SAG0027"/>
<dbReference type="KEGG" id="sag:SAG0027"/>
<dbReference type="PATRIC" id="fig|208435.3.peg.26"/>
<dbReference type="HOGENOM" id="CLU_047116_0_0_9"/>
<dbReference type="OrthoDB" id="9802507at2"/>
<dbReference type="UniPathway" id="UPA00074">
    <property type="reaction ID" value="UER00129"/>
</dbReference>
<dbReference type="Proteomes" id="UP000000821">
    <property type="component" value="Chromosome"/>
</dbReference>
<dbReference type="GO" id="GO:0005829">
    <property type="term" value="C:cytosol"/>
    <property type="evidence" value="ECO:0007669"/>
    <property type="project" value="TreeGrafter"/>
</dbReference>
<dbReference type="GO" id="GO:0005524">
    <property type="term" value="F:ATP binding"/>
    <property type="evidence" value="ECO:0007669"/>
    <property type="project" value="UniProtKB-KW"/>
</dbReference>
<dbReference type="GO" id="GO:0004637">
    <property type="term" value="F:phosphoribosylamine-glycine ligase activity"/>
    <property type="evidence" value="ECO:0007669"/>
    <property type="project" value="TreeGrafter"/>
</dbReference>
<dbReference type="GO" id="GO:0004641">
    <property type="term" value="F:phosphoribosylformylglycinamidine cyclo-ligase activity"/>
    <property type="evidence" value="ECO:0007669"/>
    <property type="project" value="UniProtKB-UniRule"/>
</dbReference>
<dbReference type="GO" id="GO:0006189">
    <property type="term" value="P:'de novo' IMP biosynthetic process"/>
    <property type="evidence" value="ECO:0007669"/>
    <property type="project" value="UniProtKB-UniRule"/>
</dbReference>
<dbReference type="GO" id="GO:0046084">
    <property type="term" value="P:adenine biosynthetic process"/>
    <property type="evidence" value="ECO:0007669"/>
    <property type="project" value="TreeGrafter"/>
</dbReference>
<dbReference type="CDD" id="cd02196">
    <property type="entry name" value="PurM"/>
    <property type="match status" value="1"/>
</dbReference>
<dbReference type="FunFam" id="3.30.1330.10:FF:000001">
    <property type="entry name" value="Phosphoribosylformylglycinamidine cyclo-ligase"/>
    <property type="match status" value="1"/>
</dbReference>
<dbReference type="FunFam" id="3.90.650.10:FF:000011">
    <property type="entry name" value="Phosphoribosylformylglycinamidine cyclo-ligase"/>
    <property type="match status" value="1"/>
</dbReference>
<dbReference type="Gene3D" id="3.90.650.10">
    <property type="entry name" value="PurM-like C-terminal domain"/>
    <property type="match status" value="1"/>
</dbReference>
<dbReference type="Gene3D" id="3.30.1330.10">
    <property type="entry name" value="PurM-like, N-terminal domain"/>
    <property type="match status" value="1"/>
</dbReference>
<dbReference type="HAMAP" id="MF_00741">
    <property type="entry name" value="AIRS"/>
    <property type="match status" value="1"/>
</dbReference>
<dbReference type="InterPro" id="IPR010918">
    <property type="entry name" value="PurM-like_C_dom"/>
</dbReference>
<dbReference type="InterPro" id="IPR036676">
    <property type="entry name" value="PurM-like_C_sf"/>
</dbReference>
<dbReference type="InterPro" id="IPR016188">
    <property type="entry name" value="PurM-like_N"/>
</dbReference>
<dbReference type="InterPro" id="IPR036921">
    <property type="entry name" value="PurM-like_N_sf"/>
</dbReference>
<dbReference type="InterPro" id="IPR004733">
    <property type="entry name" value="PurM_cligase"/>
</dbReference>
<dbReference type="NCBIfam" id="TIGR00878">
    <property type="entry name" value="purM"/>
    <property type="match status" value="1"/>
</dbReference>
<dbReference type="PANTHER" id="PTHR10520:SF12">
    <property type="entry name" value="TRIFUNCTIONAL PURINE BIOSYNTHETIC PROTEIN ADENOSINE-3"/>
    <property type="match status" value="1"/>
</dbReference>
<dbReference type="PANTHER" id="PTHR10520">
    <property type="entry name" value="TRIFUNCTIONAL PURINE BIOSYNTHETIC PROTEIN ADENOSINE-3-RELATED"/>
    <property type="match status" value="1"/>
</dbReference>
<dbReference type="Pfam" id="PF00586">
    <property type="entry name" value="AIRS"/>
    <property type="match status" value="1"/>
</dbReference>
<dbReference type="Pfam" id="PF02769">
    <property type="entry name" value="AIRS_C"/>
    <property type="match status" value="1"/>
</dbReference>
<dbReference type="SUPFAM" id="SSF56042">
    <property type="entry name" value="PurM C-terminal domain-like"/>
    <property type="match status" value="1"/>
</dbReference>
<dbReference type="SUPFAM" id="SSF55326">
    <property type="entry name" value="PurM N-terminal domain-like"/>
    <property type="match status" value="1"/>
</dbReference>
<protein>
    <recommendedName>
        <fullName evidence="1">Phosphoribosylformylglycinamidine cyclo-ligase</fullName>
        <ecNumber evidence="1">6.3.3.1</ecNumber>
    </recommendedName>
    <alternativeName>
        <fullName evidence="1">AIR synthase</fullName>
    </alternativeName>
    <alternativeName>
        <fullName evidence="1">AIRS</fullName>
    </alternativeName>
    <alternativeName>
        <fullName evidence="1">Phosphoribosyl-aminoimidazole synthetase</fullName>
    </alternativeName>
</protein>
<gene>
    <name evidence="1" type="primary">purM</name>
    <name type="ordered locus">SAG0027</name>
</gene>
<name>PUR5_STRA5</name>
<comment type="catalytic activity">
    <reaction evidence="1">
        <text>2-formamido-N(1)-(5-O-phospho-beta-D-ribosyl)acetamidine + ATP = 5-amino-1-(5-phospho-beta-D-ribosyl)imidazole + ADP + phosphate + H(+)</text>
        <dbReference type="Rhea" id="RHEA:23032"/>
        <dbReference type="ChEBI" id="CHEBI:15378"/>
        <dbReference type="ChEBI" id="CHEBI:30616"/>
        <dbReference type="ChEBI" id="CHEBI:43474"/>
        <dbReference type="ChEBI" id="CHEBI:137981"/>
        <dbReference type="ChEBI" id="CHEBI:147287"/>
        <dbReference type="ChEBI" id="CHEBI:456216"/>
        <dbReference type="EC" id="6.3.3.1"/>
    </reaction>
</comment>
<comment type="pathway">
    <text evidence="1">Purine metabolism; IMP biosynthesis via de novo pathway; 5-amino-1-(5-phospho-D-ribosyl)imidazole from N(2)-formyl-N(1)-(5-phospho-D-ribosyl)glycinamide: step 2/2.</text>
</comment>
<comment type="subcellular location">
    <subcellularLocation>
        <location evidence="1">Cytoplasm</location>
    </subcellularLocation>
</comment>
<comment type="similarity">
    <text evidence="1">Belongs to the AIR synthase family.</text>
</comment>
<reference key="1">
    <citation type="journal article" date="2002" name="Proc. Natl. Acad. Sci. U.S.A.">
        <title>Complete genome sequence and comparative genomic analysis of an emerging human pathogen, serotype V Streptococcus agalactiae.</title>
        <authorList>
            <person name="Tettelin H."/>
            <person name="Masignani V."/>
            <person name="Cieslewicz M.J."/>
            <person name="Eisen J.A."/>
            <person name="Peterson S.N."/>
            <person name="Wessels M.R."/>
            <person name="Paulsen I.T."/>
            <person name="Nelson K.E."/>
            <person name="Margarit I."/>
            <person name="Read T.D."/>
            <person name="Madoff L.C."/>
            <person name="Wolf A.M."/>
            <person name="Beanan M.J."/>
            <person name="Brinkac L.M."/>
            <person name="Daugherty S.C."/>
            <person name="DeBoy R.T."/>
            <person name="Durkin A.S."/>
            <person name="Kolonay J.F."/>
            <person name="Madupu R."/>
            <person name="Lewis M.R."/>
            <person name="Radune D."/>
            <person name="Fedorova N.B."/>
            <person name="Scanlan D."/>
            <person name="Khouri H.M."/>
            <person name="Mulligan S."/>
            <person name="Carty H.A."/>
            <person name="Cline R.T."/>
            <person name="Van Aken S.E."/>
            <person name="Gill J."/>
            <person name="Scarselli M."/>
            <person name="Mora M."/>
            <person name="Iacobini E.T."/>
            <person name="Brettoni C."/>
            <person name="Galli G."/>
            <person name="Mariani M."/>
            <person name="Vegni F."/>
            <person name="Maione D."/>
            <person name="Rinaudo D."/>
            <person name="Rappuoli R."/>
            <person name="Telford J.L."/>
            <person name="Kasper D.L."/>
            <person name="Grandi G."/>
            <person name="Fraser C.M."/>
        </authorList>
    </citation>
    <scope>NUCLEOTIDE SEQUENCE [LARGE SCALE GENOMIC DNA]</scope>
    <source>
        <strain>ATCC BAA-611 / 2603 V/R</strain>
    </source>
</reference>